<keyword id="KW-1003">Cell membrane</keyword>
<keyword id="KW-0472">Membrane</keyword>
<keyword id="KW-1185">Reference proteome</keyword>
<keyword id="KW-0812">Transmembrane</keyword>
<keyword id="KW-1133">Transmembrane helix</keyword>
<organism>
    <name type="scientific">Listeria monocytogenes serovar 1/2a (strain ATCC BAA-679 / EGD-e)</name>
    <dbReference type="NCBI Taxonomy" id="169963"/>
    <lineage>
        <taxon>Bacteria</taxon>
        <taxon>Bacillati</taxon>
        <taxon>Bacillota</taxon>
        <taxon>Bacilli</taxon>
        <taxon>Bacillales</taxon>
        <taxon>Listeriaceae</taxon>
        <taxon>Listeria</taxon>
    </lineage>
</organism>
<sequence length="174" mass="19720">MDNGIFIVVTIFIVNILYVTIYTVRLLLTMKGYRYLAALSSVFEMIIYVVALSLVLDNLNNIANVLAYAVGFGVGIIVGMKIEERIALGYITVNVITKEYNLDLPNQIRDLGYGVTSWLASGRDGERMMLEILTQRKNERKLYKHIIEIDNGAFIVSSEPKQIHGGFWVKQVRK</sequence>
<accession>Q8Y6B5</accession>
<comment type="subcellular location">
    <subcellularLocation>
        <location evidence="1">Cell membrane</location>
        <topology evidence="1">Multi-pass membrane protein</topology>
    </subcellularLocation>
</comment>
<comment type="similarity">
    <text evidence="1">Belongs to the UPF0316 family.</text>
</comment>
<feature type="chain" id="PRO_0000171948" description="UPF0316 protein lmo1776">
    <location>
        <begin position="1"/>
        <end position="174"/>
    </location>
</feature>
<feature type="transmembrane region" description="Helical" evidence="1">
    <location>
        <begin position="4"/>
        <end position="24"/>
    </location>
</feature>
<feature type="transmembrane region" description="Helical" evidence="1">
    <location>
        <begin position="36"/>
        <end position="56"/>
    </location>
</feature>
<feature type="transmembrane region" description="Helical" evidence="1">
    <location>
        <begin position="62"/>
        <end position="82"/>
    </location>
</feature>
<reference key="1">
    <citation type="journal article" date="2001" name="Science">
        <title>Comparative genomics of Listeria species.</title>
        <authorList>
            <person name="Glaser P."/>
            <person name="Frangeul L."/>
            <person name="Buchrieser C."/>
            <person name="Rusniok C."/>
            <person name="Amend A."/>
            <person name="Baquero F."/>
            <person name="Berche P."/>
            <person name="Bloecker H."/>
            <person name="Brandt P."/>
            <person name="Chakraborty T."/>
            <person name="Charbit A."/>
            <person name="Chetouani F."/>
            <person name="Couve E."/>
            <person name="de Daruvar A."/>
            <person name="Dehoux P."/>
            <person name="Domann E."/>
            <person name="Dominguez-Bernal G."/>
            <person name="Duchaud E."/>
            <person name="Durant L."/>
            <person name="Dussurget O."/>
            <person name="Entian K.-D."/>
            <person name="Fsihi H."/>
            <person name="Garcia-del Portillo F."/>
            <person name="Garrido P."/>
            <person name="Gautier L."/>
            <person name="Goebel W."/>
            <person name="Gomez-Lopez N."/>
            <person name="Hain T."/>
            <person name="Hauf J."/>
            <person name="Jackson D."/>
            <person name="Jones L.-M."/>
            <person name="Kaerst U."/>
            <person name="Kreft J."/>
            <person name="Kuhn M."/>
            <person name="Kunst F."/>
            <person name="Kurapkat G."/>
            <person name="Madueno E."/>
            <person name="Maitournam A."/>
            <person name="Mata Vicente J."/>
            <person name="Ng E."/>
            <person name="Nedjari H."/>
            <person name="Nordsiek G."/>
            <person name="Novella S."/>
            <person name="de Pablos B."/>
            <person name="Perez-Diaz J.-C."/>
            <person name="Purcell R."/>
            <person name="Remmel B."/>
            <person name="Rose M."/>
            <person name="Schlueter T."/>
            <person name="Simoes N."/>
            <person name="Tierrez A."/>
            <person name="Vazquez-Boland J.-A."/>
            <person name="Voss H."/>
            <person name="Wehland J."/>
            <person name="Cossart P."/>
        </authorList>
    </citation>
    <scope>NUCLEOTIDE SEQUENCE [LARGE SCALE GENOMIC DNA]</scope>
    <source>
        <strain>ATCC BAA-679 / EGD-e</strain>
    </source>
</reference>
<name>Y1776_LISMO</name>
<dbReference type="EMBL" id="AL591981">
    <property type="protein sequence ID" value="CAC99854.1"/>
    <property type="molecule type" value="Genomic_DNA"/>
</dbReference>
<dbReference type="PIR" id="AH1296">
    <property type="entry name" value="AH1296"/>
</dbReference>
<dbReference type="RefSeq" id="NP_465301.1">
    <property type="nucleotide sequence ID" value="NC_003210.1"/>
</dbReference>
<dbReference type="RefSeq" id="WP_003722254.1">
    <property type="nucleotide sequence ID" value="NZ_CP149495.1"/>
</dbReference>
<dbReference type="SMR" id="Q8Y6B5"/>
<dbReference type="STRING" id="169963.gene:17594458"/>
<dbReference type="PaxDb" id="169963-lmo1776"/>
<dbReference type="EnsemblBacteria" id="CAC99854">
    <property type="protein sequence ID" value="CAC99854"/>
    <property type="gene ID" value="CAC99854"/>
</dbReference>
<dbReference type="GeneID" id="985962"/>
<dbReference type="KEGG" id="lmo:lmo1776"/>
<dbReference type="PATRIC" id="fig|169963.11.peg.1820"/>
<dbReference type="eggNOG" id="COG4843">
    <property type="taxonomic scope" value="Bacteria"/>
</dbReference>
<dbReference type="HOGENOM" id="CLU_106166_1_0_9"/>
<dbReference type="OrthoDB" id="48231at2"/>
<dbReference type="PhylomeDB" id="Q8Y6B5"/>
<dbReference type="BioCyc" id="LMON169963:LMO1776-MONOMER"/>
<dbReference type="Proteomes" id="UP000000817">
    <property type="component" value="Chromosome"/>
</dbReference>
<dbReference type="GO" id="GO:0005886">
    <property type="term" value="C:plasma membrane"/>
    <property type="evidence" value="ECO:0007669"/>
    <property type="project" value="UniProtKB-SubCell"/>
</dbReference>
<dbReference type="CDD" id="cd16381">
    <property type="entry name" value="YitT_C_like_1"/>
    <property type="match status" value="1"/>
</dbReference>
<dbReference type="HAMAP" id="MF_01515">
    <property type="entry name" value="UPF0316"/>
    <property type="match status" value="1"/>
</dbReference>
<dbReference type="InterPro" id="IPR019264">
    <property type="entry name" value="DUF2179"/>
</dbReference>
<dbReference type="InterPro" id="IPR044035">
    <property type="entry name" value="DUF5698"/>
</dbReference>
<dbReference type="InterPro" id="IPR022930">
    <property type="entry name" value="UPF0316"/>
</dbReference>
<dbReference type="NCBIfam" id="NF003192">
    <property type="entry name" value="PRK04164.1-3"/>
    <property type="match status" value="1"/>
</dbReference>
<dbReference type="NCBIfam" id="NF003194">
    <property type="entry name" value="PRK04164.1-5"/>
    <property type="match status" value="1"/>
</dbReference>
<dbReference type="PANTHER" id="PTHR40060">
    <property type="entry name" value="UPF0316 PROTEIN YEBE"/>
    <property type="match status" value="1"/>
</dbReference>
<dbReference type="PANTHER" id="PTHR40060:SF1">
    <property type="entry name" value="UPF0316 PROTEIN YEBE"/>
    <property type="match status" value="1"/>
</dbReference>
<dbReference type="Pfam" id="PF10035">
    <property type="entry name" value="DUF2179"/>
    <property type="match status" value="1"/>
</dbReference>
<dbReference type="Pfam" id="PF18955">
    <property type="entry name" value="DUF5698"/>
    <property type="match status" value="1"/>
</dbReference>
<evidence type="ECO:0000255" key="1">
    <source>
        <dbReference type="HAMAP-Rule" id="MF_01515"/>
    </source>
</evidence>
<protein>
    <recommendedName>
        <fullName evidence="1">UPF0316 protein lmo1776</fullName>
    </recommendedName>
</protein>
<gene>
    <name type="ordered locus">lmo1776</name>
</gene>
<proteinExistence type="inferred from homology"/>